<name>SYW_WOLSU</name>
<accession>Q7MAE0</accession>
<evidence type="ECO:0000255" key="1">
    <source>
        <dbReference type="HAMAP-Rule" id="MF_00140"/>
    </source>
</evidence>
<dbReference type="EC" id="6.1.1.2" evidence="1"/>
<dbReference type="EMBL" id="BX571657">
    <property type="protein sequence ID" value="CAE09462.1"/>
    <property type="molecule type" value="Genomic_DNA"/>
</dbReference>
<dbReference type="RefSeq" id="WP_011138263.1">
    <property type="nucleotide sequence ID" value="NC_005090.1"/>
</dbReference>
<dbReference type="SMR" id="Q7MAE0"/>
<dbReference type="STRING" id="273121.WS0311"/>
<dbReference type="KEGG" id="wsu:WS0311"/>
<dbReference type="eggNOG" id="COG0180">
    <property type="taxonomic scope" value="Bacteria"/>
</dbReference>
<dbReference type="HOGENOM" id="CLU_029244_1_1_7"/>
<dbReference type="Proteomes" id="UP000000422">
    <property type="component" value="Chromosome"/>
</dbReference>
<dbReference type="GO" id="GO:0005829">
    <property type="term" value="C:cytosol"/>
    <property type="evidence" value="ECO:0007669"/>
    <property type="project" value="TreeGrafter"/>
</dbReference>
<dbReference type="GO" id="GO:0005524">
    <property type="term" value="F:ATP binding"/>
    <property type="evidence" value="ECO:0007669"/>
    <property type="project" value="UniProtKB-UniRule"/>
</dbReference>
<dbReference type="GO" id="GO:0004830">
    <property type="term" value="F:tryptophan-tRNA ligase activity"/>
    <property type="evidence" value="ECO:0007669"/>
    <property type="project" value="UniProtKB-UniRule"/>
</dbReference>
<dbReference type="GO" id="GO:0006436">
    <property type="term" value="P:tryptophanyl-tRNA aminoacylation"/>
    <property type="evidence" value="ECO:0007669"/>
    <property type="project" value="UniProtKB-UniRule"/>
</dbReference>
<dbReference type="CDD" id="cd00806">
    <property type="entry name" value="TrpRS_core"/>
    <property type="match status" value="1"/>
</dbReference>
<dbReference type="FunFam" id="1.10.240.10:FF:000002">
    <property type="entry name" value="Tryptophan--tRNA ligase"/>
    <property type="match status" value="1"/>
</dbReference>
<dbReference type="Gene3D" id="3.40.50.620">
    <property type="entry name" value="HUPs"/>
    <property type="match status" value="1"/>
</dbReference>
<dbReference type="Gene3D" id="1.10.240.10">
    <property type="entry name" value="Tyrosyl-Transfer RNA Synthetase"/>
    <property type="match status" value="1"/>
</dbReference>
<dbReference type="HAMAP" id="MF_00140_B">
    <property type="entry name" value="Trp_tRNA_synth_B"/>
    <property type="match status" value="1"/>
</dbReference>
<dbReference type="InterPro" id="IPR001412">
    <property type="entry name" value="aa-tRNA-synth_I_CS"/>
</dbReference>
<dbReference type="InterPro" id="IPR002305">
    <property type="entry name" value="aa-tRNA-synth_Ic"/>
</dbReference>
<dbReference type="InterPro" id="IPR014729">
    <property type="entry name" value="Rossmann-like_a/b/a_fold"/>
</dbReference>
<dbReference type="InterPro" id="IPR002306">
    <property type="entry name" value="Trp-tRNA-ligase"/>
</dbReference>
<dbReference type="InterPro" id="IPR024109">
    <property type="entry name" value="Trp-tRNA-ligase_bac-type"/>
</dbReference>
<dbReference type="InterPro" id="IPR050203">
    <property type="entry name" value="Trp-tRNA_synthetase"/>
</dbReference>
<dbReference type="NCBIfam" id="TIGR00233">
    <property type="entry name" value="trpS"/>
    <property type="match status" value="1"/>
</dbReference>
<dbReference type="PANTHER" id="PTHR43766">
    <property type="entry name" value="TRYPTOPHAN--TRNA LIGASE, MITOCHONDRIAL"/>
    <property type="match status" value="1"/>
</dbReference>
<dbReference type="PANTHER" id="PTHR43766:SF1">
    <property type="entry name" value="TRYPTOPHAN--TRNA LIGASE, MITOCHONDRIAL"/>
    <property type="match status" value="1"/>
</dbReference>
<dbReference type="Pfam" id="PF00579">
    <property type="entry name" value="tRNA-synt_1b"/>
    <property type="match status" value="1"/>
</dbReference>
<dbReference type="PRINTS" id="PR01039">
    <property type="entry name" value="TRNASYNTHTRP"/>
</dbReference>
<dbReference type="SUPFAM" id="SSF52374">
    <property type="entry name" value="Nucleotidylyl transferase"/>
    <property type="match status" value="1"/>
</dbReference>
<dbReference type="PROSITE" id="PS00178">
    <property type="entry name" value="AA_TRNA_LIGASE_I"/>
    <property type="match status" value="1"/>
</dbReference>
<feature type="chain" id="PRO_0000136711" description="Tryptophan--tRNA ligase">
    <location>
        <begin position="1"/>
        <end position="328"/>
    </location>
</feature>
<feature type="short sequence motif" description="'HIGH' region" evidence="1">
    <location>
        <begin position="12"/>
        <end position="20"/>
    </location>
</feature>
<feature type="short sequence motif" description="'KMSKS' region" evidence="1">
    <location>
        <begin position="195"/>
        <end position="199"/>
    </location>
</feature>
<feature type="binding site" evidence="1">
    <location>
        <begin position="11"/>
        <end position="13"/>
    </location>
    <ligand>
        <name>ATP</name>
        <dbReference type="ChEBI" id="CHEBI:30616"/>
    </ligand>
</feature>
<feature type="binding site" evidence="1">
    <location>
        <begin position="19"/>
        <end position="20"/>
    </location>
    <ligand>
        <name>ATP</name>
        <dbReference type="ChEBI" id="CHEBI:30616"/>
    </ligand>
</feature>
<feature type="binding site" evidence="1">
    <location>
        <position position="135"/>
    </location>
    <ligand>
        <name>L-tryptophan</name>
        <dbReference type="ChEBI" id="CHEBI:57912"/>
    </ligand>
</feature>
<feature type="binding site" evidence="1">
    <location>
        <begin position="147"/>
        <end position="149"/>
    </location>
    <ligand>
        <name>ATP</name>
        <dbReference type="ChEBI" id="CHEBI:30616"/>
    </ligand>
</feature>
<feature type="binding site" evidence="1">
    <location>
        <position position="186"/>
    </location>
    <ligand>
        <name>ATP</name>
        <dbReference type="ChEBI" id="CHEBI:30616"/>
    </ligand>
</feature>
<feature type="binding site" evidence="1">
    <location>
        <begin position="195"/>
        <end position="199"/>
    </location>
    <ligand>
        <name>ATP</name>
        <dbReference type="ChEBI" id="CHEBI:30616"/>
    </ligand>
</feature>
<proteinExistence type="inferred from homology"/>
<keyword id="KW-0030">Aminoacyl-tRNA synthetase</keyword>
<keyword id="KW-0067">ATP-binding</keyword>
<keyword id="KW-0963">Cytoplasm</keyword>
<keyword id="KW-0436">Ligase</keyword>
<keyword id="KW-0547">Nucleotide-binding</keyword>
<keyword id="KW-0648">Protein biosynthesis</keyword>
<keyword id="KW-1185">Reference proteome</keyword>
<comment type="function">
    <text evidence="1">Catalyzes the attachment of tryptophan to tRNA(Trp).</text>
</comment>
<comment type="catalytic activity">
    <reaction evidence="1">
        <text>tRNA(Trp) + L-tryptophan + ATP = L-tryptophyl-tRNA(Trp) + AMP + diphosphate + H(+)</text>
        <dbReference type="Rhea" id="RHEA:24080"/>
        <dbReference type="Rhea" id="RHEA-COMP:9671"/>
        <dbReference type="Rhea" id="RHEA-COMP:9705"/>
        <dbReference type="ChEBI" id="CHEBI:15378"/>
        <dbReference type="ChEBI" id="CHEBI:30616"/>
        <dbReference type="ChEBI" id="CHEBI:33019"/>
        <dbReference type="ChEBI" id="CHEBI:57912"/>
        <dbReference type="ChEBI" id="CHEBI:78442"/>
        <dbReference type="ChEBI" id="CHEBI:78535"/>
        <dbReference type="ChEBI" id="CHEBI:456215"/>
        <dbReference type="EC" id="6.1.1.2"/>
    </reaction>
</comment>
<comment type="subunit">
    <text evidence="1">Homodimer.</text>
</comment>
<comment type="subcellular location">
    <subcellularLocation>
        <location evidence="1">Cytoplasm</location>
    </subcellularLocation>
</comment>
<comment type="similarity">
    <text evidence="1">Belongs to the class-I aminoacyl-tRNA synthetase family.</text>
</comment>
<sequence length="328" mass="37038">MIKKRVFSGIQPTGNIHLGNYLGAVKNWVDSQDEFDNIFCIVNSHAITIKQDPALLRAKTYELAAVLLACGIDMKKSKLFIQSEVDEHAALAWILDCNIPMGDMSRMTQFKDKSQKNPKNINIGLFNYPALMAADILLYQTDFVPVGEDQKQHLELTRDVAERFNRDYGETFKIPEPMIPKMGARIMGLDDPTKKMSKSEGKPNHGIALLDTPDEILKKFKKATTDSENLVRFNPEQIGIFNLLTIYQIFTGYSQEVIEAEFEGKGYGIFKVAVAEAVIEGLKPIQERYAKLTKEQGYLEEVLSHGASEVRKIAQKTYKEVKERVGLI</sequence>
<organism>
    <name type="scientific">Wolinella succinogenes (strain ATCC 29543 / DSM 1740 / CCUG 13145 / JCM 31913 / LMG 7466 / NCTC 11488 / FDC 602W)</name>
    <name type="common">Vibrio succinogenes</name>
    <dbReference type="NCBI Taxonomy" id="273121"/>
    <lineage>
        <taxon>Bacteria</taxon>
        <taxon>Pseudomonadati</taxon>
        <taxon>Campylobacterota</taxon>
        <taxon>Epsilonproteobacteria</taxon>
        <taxon>Campylobacterales</taxon>
        <taxon>Helicobacteraceae</taxon>
        <taxon>Wolinella</taxon>
    </lineage>
</organism>
<protein>
    <recommendedName>
        <fullName evidence="1">Tryptophan--tRNA ligase</fullName>
        <ecNumber evidence="1">6.1.1.2</ecNumber>
    </recommendedName>
    <alternativeName>
        <fullName evidence="1">Tryptophanyl-tRNA synthetase</fullName>
        <shortName evidence="1">TrpRS</shortName>
    </alternativeName>
</protein>
<gene>
    <name evidence="1" type="primary">trpS</name>
    <name type="ordered locus">WS0311</name>
</gene>
<reference key="1">
    <citation type="journal article" date="2003" name="Proc. Natl. Acad. Sci. U.S.A.">
        <title>Complete genome sequence and analysis of Wolinella succinogenes.</title>
        <authorList>
            <person name="Baar C."/>
            <person name="Eppinger M."/>
            <person name="Raddatz G."/>
            <person name="Simon J."/>
            <person name="Lanz C."/>
            <person name="Klimmek O."/>
            <person name="Nandakumar R."/>
            <person name="Gross R."/>
            <person name="Rosinus A."/>
            <person name="Keller H."/>
            <person name="Jagtap P."/>
            <person name="Linke B."/>
            <person name="Meyer F."/>
            <person name="Lederer H."/>
            <person name="Schuster S.C."/>
        </authorList>
    </citation>
    <scope>NUCLEOTIDE SEQUENCE [LARGE SCALE GENOMIC DNA]</scope>
    <source>
        <strain>ATCC 29543 / DSM 1740 / CCUG 13145 / JCM 31913 / LMG 7466 / NCTC 11488 / FDC 602W</strain>
    </source>
</reference>